<keyword id="KW-0945">Host-virus interaction</keyword>
<keyword id="KW-0426">Late protein</keyword>
<keyword id="KW-1185">Reference proteome</keyword>
<keyword id="KW-1161">Viral attachment to host cell</keyword>
<keyword id="KW-1230">Viral tail fiber protein</keyword>
<keyword id="KW-1227">Viral tail protein</keyword>
<keyword id="KW-0946">Virion</keyword>
<keyword id="KW-1160">Virus entry into host cell</keyword>
<feature type="chain" id="PRO_0000165308" description="Probable tail fiber protein">
    <location>
        <begin position="1"/>
        <end position="925"/>
    </location>
</feature>
<protein>
    <recommendedName>
        <fullName>Probable tail fiber protein</fullName>
    </recommendedName>
    <alternativeName>
        <fullName evidence="1">Gene product 31</fullName>
        <shortName>gp31</shortName>
    </alternativeName>
    <alternativeName>
        <fullName>ORF31</fullName>
    </alternativeName>
</protein>
<comment type="function">
    <text evidence="1">Probable tail fiber that mediates the attachment to the host cell.</text>
</comment>
<comment type="subcellular location">
    <subcellularLocation>
        <location evidence="1">Virion</location>
    </subcellularLocation>
</comment>
<comment type="similarity">
    <text evidence="1">To phage P22 protein H.</text>
</comment>
<reference key="1">
    <citation type="journal article" date="1996" name="Nucleic Acids Res.">
        <title>The complete nucleotide sequence of bacteriophage HP1 DNA.</title>
        <authorList>
            <person name="Esposito D."/>
            <person name="Fitzmaurice W.P."/>
            <person name="Benjamin R.C."/>
            <person name="Goodman S.D."/>
            <person name="Waldman A.S."/>
            <person name="Scocca J.J."/>
        </authorList>
    </citation>
    <scope>NUCLEOTIDE SEQUENCE [LARGE SCALE GENOMIC DNA]</scope>
</reference>
<evidence type="ECO:0000305" key="1"/>
<dbReference type="EMBL" id="U24159">
    <property type="protein sequence ID" value="AAB09218.1"/>
    <property type="molecule type" value="Genomic_DNA"/>
</dbReference>
<dbReference type="PIR" id="S69539">
    <property type="entry name" value="S69539"/>
</dbReference>
<dbReference type="RefSeq" id="NP_043502.1">
    <property type="nucleotide sequence ID" value="NC_001697.1"/>
</dbReference>
<dbReference type="SMR" id="P51735"/>
<dbReference type="GeneID" id="1261117"/>
<dbReference type="KEGG" id="vg:1261117"/>
<dbReference type="Proteomes" id="UP000001713">
    <property type="component" value="Segment"/>
</dbReference>
<dbReference type="GO" id="GO:0098024">
    <property type="term" value="C:virus tail, fiber"/>
    <property type="evidence" value="ECO:0007669"/>
    <property type="project" value="UniProtKB-KW"/>
</dbReference>
<dbReference type="GO" id="GO:0046718">
    <property type="term" value="P:symbiont entry into host cell"/>
    <property type="evidence" value="ECO:0007669"/>
    <property type="project" value="UniProtKB-KW"/>
</dbReference>
<dbReference type="GO" id="GO:0019062">
    <property type="term" value="P:virion attachment to host cell"/>
    <property type="evidence" value="ECO:0007669"/>
    <property type="project" value="UniProtKB-KW"/>
</dbReference>
<dbReference type="CDD" id="cd19958">
    <property type="entry name" value="pyocin_knob"/>
    <property type="match status" value="1"/>
</dbReference>
<dbReference type="Gene3D" id="3.90.1340.10">
    <property type="entry name" value="Phage tail collar domain"/>
    <property type="match status" value="1"/>
</dbReference>
<dbReference type="InterPro" id="IPR005068">
    <property type="entry name" value="Phage_lambda_Stf-r2"/>
</dbReference>
<dbReference type="InterPro" id="IPR011083">
    <property type="entry name" value="Phage_tail_collar_dom"/>
</dbReference>
<dbReference type="InterPro" id="IPR037053">
    <property type="entry name" value="Phage_tail_collar_dom_sf"/>
</dbReference>
<dbReference type="InterPro" id="IPR051934">
    <property type="entry name" value="Phage_Tail_Fiber_Structural"/>
</dbReference>
<dbReference type="InterPro" id="IPR022225">
    <property type="entry name" value="Phage_tail_fibre_N"/>
</dbReference>
<dbReference type="PANTHER" id="PTHR35191">
    <property type="entry name" value="PROPHAGE SIDE TAIL FIBER PROTEIN HOMOLOG STFQ-RELATED"/>
    <property type="match status" value="1"/>
</dbReference>
<dbReference type="PANTHER" id="PTHR35191:SF1">
    <property type="entry name" value="PROPHAGE SIDE TAIL FIBER PROTEIN HOMOLOG STFQ-RELATED"/>
    <property type="match status" value="1"/>
</dbReference>
<dbReference type="Pfam" id="PF07484">
    <property type="entry name" value="Collar"/>
    <property type="match status" value="1"/>
</dbReference>
<dbReference type="Pfam" id="PF03406">
    <property type="entry name" value="Phage_fiber_2"/>
    <property type="match status" value="1"/>
</dbReference>
<dbReference type="Pfam" id="PF12571">
    <property type="entry name" value="Phage_tail_fib"/>
    <property type="match status" value="1"/>
</dbReference>
<dbReference type="SUPFAM" id="SSF88874">
    <property type="entry name" value="Receptor-binding domain of short tail fibre protein gp12"/>
    <property type="match status" value="2"/>
</dbReference>
<organism>
    <name type="scientific">Haemophilus phage HP1 (strain HP1c1)</name>
    <name type="common">Bacteriophage HP1</name>
    <dbReference type="NCBI Taxonomy" id="1289570"/>
    <lineage>
        <taxon>Viruses</taxon>
        <taxon>Duplodnaviria</taxon>
        <taxon>Heunggongvirae</taxon>
        <taxon>Uroviricota</taxon>
        <taxon>Caudoviricetes</taxon>
        <taxon>Peduoviridae</taxon>
        <taxon>Hpunavirus</taxon>
        <taxon>Haemophilus phage HP1</taxon>
    </lineage>
</organism>
<sequence length="925" mass="102001">MASLITPQFERYVAEQTIARGTVQFDEFIFANIPGLNENNLTQHLTIPTSAQIVHRQAVSQSGVINENAVVYSVTIGTEVGDFDFNFIGLINRSKNLLAVAVQTDTVKKIRNKNAVQGNSITRNMLLEFSGAKALTGINVNANTWQIDFTVRLHGLDEKIRLTNRDLYGRAVFFDDSFLVKRKTGNQFTIQPGNAYVEGVRMDLGTEHHLTANSLPCSIYADVVHHCTVTGEYQTEIKYLTQSKADYVDTANRQHYVQILADIDSQGNVTDRRLLSPFWGMNPLTLDDTTENTKDKLGHTHKLPIASIKKRGITKLSSATNSDSETQAATSKAVKTAYDKAVEVKTTAESKVGLRGNESIQGTKSFESKIIGFRGIGVADSQTYANANHLLNMGANDGDGWIEYKKSNRVIGTIRIRANGELSYNNQKIYHAGAKPQFNTDIEGKPNTLAGYGIGNFKVEQGQGDANGYKTDGNYYLASGQNLPENGEWHIEVVSGGATNAVRQIARKANDNKIKTRFFNGSNWSEWKDAGGDGVPIGSVVSFPRAVTNPVGFLKANGTTFNQQTFPDLYRTLGDSNQLPDLTRSDVGMTAYFAVDNIPSGWIAFDSIRSTVTQQNYPELYQYLVDKYSSISNVPLAEDRFIRNTGNGLNIGQTQSDEIKKHVHRVRTHWADSSDSSIFYDKTKTVIDSRLRTATTTDDNLSDNGFMHPLLDTPMATGGDETRPKSLILKLCIKAKNTFDDVQFWVKAFGVVENVGALDAGTLAQNMQALSESVGQKIKENKQSTLLEINNAKADINQKFLQVQESLSQIKTVWQGNVSSGRINISEKCFGKTLILYLQSSESHRLDDNNNIEPVSFEVGAEIEGKSGGGVYLSATHDVTPHYSSGGSRLYGVGVKKFAVYVGRDGTTIEIEDLSNYFVKRIDIR</sequence>
<accession>P51735</accession>
<name>FIB31_BPHC1</name>
<organismHost>
    <name type="scientific">Haemophilus influenzae</name>
    <dbReference type="NCBI Taxonomy" id="727"/>
</organismHost>
<proteinExistence type="predicted"/>